<proteinExistence type="evidence at protein level"/>
<keyword id="KW-0903">Direct protein sequencing</keyword>
<keyword id="KW-1015">Disulfide bond</keyword>
<keyword id="KW-0646">Protease inhibitor</keyword>
<keyword id="KW-0964">Secreted</keyword>
<keyword id="KW-0722">Serine protease inhibitor</keyword>
<keyword id="KW-0732">Signal</keyword>
<dbReference type="EMBL" id="AM411368">
    <property type="protein sequence ID" value="CAL69609.1"/>
    <property type="molecule type" value="mRNA"/>
</dbReference>
<dbReference type="SMR" id="A8Y7P1"/>
<dbReference type="MEROPS" id="I02.062"/>
<dbReference type="GO" id="GO:0005615">
    <property type="term" value="C:extracellular space"/>
    <property type="evidence" value="ECO:0007669"/>
    <property type="project" value="TreeGrafter"/>
</dbReference>
<dbReference type="GO" id="GO:0004867">
    <property type="term" value="F:serine-type endopeptidase inhibitor activity"/>
    <property type="evidence" value="ECO:0007669"/>
    <property type="project" value="UniProtKB-KW"/>
</dbReference>
<dbReference type="CDD" id="cd22608">
    <property type="entry name" value="Kunitz_PPTI-like"/>
    <property type="match status" value="1"/>
</dbReference>
<dbReference type="FunFam" id="4.10.410.10:FF:000021">
    <property type="entry name" value="Serine protease inhibitor, putative"/>
    <property type="match status" value="1"/>
</dbReference>
<dbReference type="Gene3D" id="4.10.410.10">
    <property type="entry name" value="Pancreatic trypsin inhibitor Kunitz domain"/>
    <property type="match status" value="1"/>
</dbReference>
<dbReference type="InterPro" id="IPR002223">
    <property type="entry name" value="Kunitz_BPTI"/>
</dbReference>
<dbReference type="InterPro" id="IPR036880">
    <property type="entry name" value="Kunitz_BPTI_sf"/>
</dbReference>
<dbReference type="InterPro" id="IPR020901">
    <property type="entry name" value="Prtase_inh_Kunz-CS"/>
</dbReference>
<dbReference type="InterPro" id="IPR050098">
    <property type="entry name" value="TFPI/VKTCI-like"/>
</dbReference>
<dbReference type="PANTHER" id="PTHR10083">
    <property type="entry name" value="KUNITZ-TYPE PROTEASE INHIBITOR-RELATED"/>
    <property type="match status" value="1"/>
</dbReference>
<dbReference type="PANTHER" id="PTHR10083:SF376">
    <property type="entry name" value="SERINE PEPTIDASE INHIBITOR, KUNITZ TYPE, 3"/>
    <property type="match status" value="1"/>
</dbReference>
<dbReference type="Pfam" id="PF00014">
    <property type="entry name" value="Kunitz_BPTI"/>
    <property type="match status" value="1"/>
</dbReference>
<dbReference type="PRINTS" id="PR00759">
    <property type="entry name" value="BASICPTASE"/>
</dbReference>
<dbReference type="SMART" id="SM00131">
    <property type="entry name" value="KU"/>
    <property type="match status" value="1"/>
</dbReference>
<dbReference type="SUPFAM" id="SSF57362">
    <property type="entry name" value="BPTI-like"/>
    <property type="match status" value="1"/>
</dbReference>
<dbReference type="PROSITE" id="PS00280">
    <property type="entry name" value="BPTI_KUNITZ_1"/>
    <property type="match status" value="1"/>
</dbReference>
<dbReference type="PROSITE" id="PS50279">
    <property type="entry name" value="BPTI_KUNITZ_2"/>
    <property type="match status" value="1"/>
</dbReference>
<name>VKTB1_DABSI</name>
<feature type="signal peptide" evidence="3">
    <location>
        <begin position="1"/>
        <end position="24"/>
    </location>
</feature>
<feature type="chain" id="PRO_5000284434" description="Kunitz-type serine protease inhibitor B1">
    <location>
        <begin position="25"/>
        <end position="84"/>
    </location>
</feature>
<feature type="domain" description="BPTI/Kunitz inhibitor" evidence="2">
    <location>
        <begin position="31"/>
        <end position="81"/>
    </location>
</feature>
<feature type="site" description="Reactive bond for chymotrypsin" evidence="1">
    <location>
        <begin position="41"/>
        <end position="42"/>
    </location>
</feature>
<feature type="disulfide bond" evidence="2">
    <location>
        <begin position="31"/>
        <end position="81"/>
    </location>
</feature>
<feature type="disulfide bond" evidence="2">
    <location>
        <begin position="40"/>
        <end position="64"/>
    </location>
</feature>
<feature type="disulfide bond" evidence="2">
    <location>
        <begin position="56"/>
        <end position="77"/>
    </location>
</feature>
<reference key="1">
    <citation type="journal article" date="2013" name="Peptides">
        <title>Purification, characterization and molecular cloning of chymotrypsin inhibitor peptides from the venom of Burmese Daboia russelli siamensis.</title>
        <authorList>
            <person name="Guo C.T."/>
            <person name="McClean S."/>
            <person name="Shaw C."/>
            <person name="Rao P.F."/>
            <person name="Ye M.Y."/>
            <person name="Bjourson A.J."/>
        </authorList>
    </citation>
    <scope>NUCLEOTIDE SEQUENCE [MRNA]</scope>
    <scope>PROTEIN SEQUENCE OF 25-47</scope>
    <scope>FUNCTION</scope>
    <scope>MASS SPECTROMETRY</scope>
    <source>
        <strain>Myanmar</strain>
        <tissue>Venom</tissue>
        <tissue>Venom gland</tissue>
    </source>
</reference>
<organism>
    <name type="scientific">Daboia siamensis</name>
    <name type="common">Eastern Russel's viper</name>
    <name type="synonym">Daboia russelii siamensis</name>
    <dbReference type="NCBI Taxonomy" id="343250"/>
    <lineage>
        <taxon>Eukaryota</taxon>
        <taxon>Metazoa</taxon>
        <taxon>Chordata</taxon>
        <taxon>Craniata</taxon>
        <taxon>Vertebrata</taxon>
        <taxon>Euteleostomi</taxon>
        <taxon>Lepidosauria</taxon>
        <taxon>Squamata</taxon>
        <taxon>Bifurcata</taxon>
        <taxon>Unidentata</taxon>
        <taxon>Episquamata</taxon>
        <taxon>Toxicofera</taxon>
        <taxon>Serpentes</taxon>
        <taxon>Colubroidea</taxon>
        <taxon>Viperidae</taxon>
        <taxon>Viperinae</taxon>
        <taxon>Daboia</taxon>
    </lineage>
</organism>
<accession>A8Y7P1</accession>
<protein>
    <recommendedName>
        <fullName>Kunitz-type serine protease inhibitor B1</fullName>
    </recommendedName>
    <alternativeName>
        <fullName>BBPTI-1</fullName>
        <shortName>BPTI-1</shortName>
    </alternativeName>
    <alternativeName>
        <fullName>Trypsin inhibitor 1</fullName>
    </alternativeName>
    <alternativeName>
        <fullName>Trypsin inhibitor B1</fullName>
    </alternativeName>
</protein>
<evidence type="ECO:0000250" key="1"/>
<evidence type="ECO:0000255" key="2">
    <source>
        <dbReference type="PROSITE-ProRule" id="PRU00031"/>
    </source>
</evidence>
<evidence type="ECO:0000269" key="3">
    <source>
    </source>
</evidence>
<evidence type="ECO:0000305" key="4"/>
<comment type="function">
    <text evidence="3">Serine protease inhibitor that has activity against chymotrypsin (Ki=4.77 nM) but not against trypsin.</text>
</comment>
<comment type="subcellular location">
    <subcellularLocation>
        <location>Secreted</location>
    </subcellularLocation>
</comment>
<comment type="tissue specificity">
    <text>Expressed by the venom gland.</text>
</comment>
<comment type="mass spectrometry" mass="6874.2" method="MALDI" evidence="3"/>
<comment type="similarity">
    <text evidence="4">Belongs to the venom Kunitz-type family.</text>
</comment>
<sequence length="84" mass="9318">MSSGGLLLLLGLLTLWAELTPISGHDRPKFCYLPADPGECLAHMRSFYYDSESKKCKEFIYGGCHGNANKFPSRDKCRQTCGGK</sequence>